<accession>Q54SH7</accession>
<proteinExistence type="evidence at transcript level"/>
<name>GRLC_DICDI</name>
<organism>
    <name type="scientific">Dictyostelium discoideum</name>
    <name type="common">Social amoeba</name>
    <dbReference type="NCBI Taxonomy" id="44689"/>
    <lineage>
        <taxon>Eukaryota</taxon>
        <taxon>Amoebozoa</taxon>
        <taxon>Evosea</taxon>
        <taxon>Eumycetozoa</taxon>
        <taxon>Dictyostelia</taxon>
        <taxon>Dictyosteliales</taxon>
        <taxon>Dictyosteliaceae</taxon>
        <taxon>Dictyostelium</taxon>
    </lineage>
</organism>
<feature type="signal peptide" evidence="1">
    <location>
        <begin position="1"/>
        <end position="21"/>
    </location>
</feature>
<feature type="chain" id="PRO_0000370348" description="Metabotropic glutamate receptor-like protein C">
    <location>
        <begin position="22"/>
        <end position="800"/>
    </location>
</feature>
<feature type="topological domain" description="Extracellular" evidence="1">
    <location>
        <begin position="22"/>
        <end position="392"/>
    </location>
</feature>
<feature type="transmembrane region" description="Helical; Name=1" evidence="1">
    <location>
        <begin position="393"/>
        <end position="413"/>
    </location>
</feature>
<feature type="topological domain" description="Cytoplasmic" evidence="1">
    <location>
        <begin position="414"/>
        <end position="426"/>
    </location>
</feature>
<feature type="transmembrane region" description="Helical; Name=2" evidence="1">
    <location>
        <begin position="427"/>
        <end position="447"/>
    </location>
</feature>
<feature type="topological domain" description="Extracellular" evidence="1">
    <location>
        <begin position="448"/>
        <end position="463"/>
    </location>
</feature>
<feature type="transmembrane region" description="Helical; Name=3" evidence="1">
    <location>
        <begin position="464"/>
        <end position="484"/>
    </location>
</feature>
<feature type="topological domain" description="Cytoplasmic" evidence="1">
    <location>
        <begin position="485"/>
        <end position="499"/>
    </location>
</feature>
<feature type="transmembrane region" description="Helical; Name=4" evidence="1">
    <location>
        <begin position="500"/>
        <end position="520"/>
    </location>
</feature>
<feature type="topological domain" description="Extracellular" evidence="1">
    <location>
        <begin position="521"/>
        <end position="551"/>
    </location>
</feature>
<feature type="transmembrane region" description="Helical; Name=5" evidence="1">
    <location>
        <begin position="552"/>
        <end position="572"/>
    </location>
</feature>
<feature type="topological domain" description="Cytoplasmic" evidence="1">
    <location>
        <begin position="573"/>
        <end position="586"/>
    </location>
</feature>
<feature type="transmembrane region" description="Helical; Name=6" evidence="1">
    <location>
        <begin position="587"/>
        <end position="607"/>
    </location>
</feature>
<feature type="topological domain" description="Extracellular" evidence="1">
    <location>
        <begin position="608"/>
        <end position="616"/>
    </location>
</feature>
<feature type="transmembrane region" description="Helical; Name=7" evidence="1">
    <location>
        <begin position="617"/>
        <end position="637"/>
    </location>
</feature>
<feature type="topological domain" description="Cytoplasmic" evidence="1">
    <location>
        <begin position="638"/>
        <end position="800"/>
    </location>
</feature>
<feature type="region of interest" description="Disordered" evidence="2">
    <location>
        <begin position="658"/>
        <end position="694"/>
    </location>
</feature>
<feature type="region of interest" description="Disordered" evidence="2">
    <location>
        <begin position="718"/>
        <end position="800"/>
    </location>
</feature>
<feature type="compositionally biased region" description="Acidic residues" evidence="2">
    <location>
        <begin position="718"/>
        <end position="732"/>
    </location>
</feature>
<feature type="compositionally biased region" description="Low complexity" evidence="2">
    <location>
        <begin position="733"/>
        <end position="774"/>
    </location>
</feature>
<feature type="compositionally biased region" description="Basic and acidic residues" evidence="2">
    <location>
        <begin position="781"/>
        <end position="791"/>
    </location>
</feature>
<feature type="glycosylation site" description="N-linked (GlcNAc...) asparagine" evidence="1">
    <location>
        <position position="69"/>
    </location>
</feature>
<feature type="glycosylation site" description="N-linked (GlcNAc...) asparagine" evidence="1">
    <location>
        <position position="107"/>
    </location>
</feature>
<feature type="glycosylation site" description="N-linked (GlcNAc...) asparagine" evidence="1">
    <location>
        <position position="166"/>
    </location>
</feature>
<feature type="glycosylation site" description="N-linked (GlcNAc...) asparagine" evidence="1">
    <location>
        <position position="258"/>
    </location>
</feature>
<feature type="glycosylation site" description="N-linked (GlcNAc...) asparagine" evidence="1">
    <location>
        <position position="276"/>
    </location>
</feature>
<feature type="glycosylation site" description="N-linked (GlcNAc...) asparagine" evidence="1">
    <location>
        <position position="302"/>
    </location>
</feature>
<feature type="glycosylation site" description="N-linked (GlcNAc...) asparagine" evidence="1">
    <location>
        <position position="345"/>
    </location>
</feature>
<feature type="glycosylation site" description="N-linked (GlcNAc...) asparagine" evidence="1">
    <location>
        <position position="546"/>
    </location>
</feature>
<sequence length="800" mass="89595">MKMKIIFLILILIFSINIIKCDKEFKMLTLLTAQVDDLGFNNMINQGRIEVAKGMNIEDSRLLVVEGFNETFKHLLPIVQNDDIDLVICSSSGHLQACRAIAEMYINSTTIKTQFLVRGSSSPTRNLIYISYNYASANYISGYFAALFSKTGKIGFVSPGQAANNNDSFVYAFWVGARQVNPDIKFYYYNIGNYLDVDKTVAATNDLLDMGCDVVGNTLDDFSTGDASIARGFPAIGTNGFPQRHVYGENVIYSYSYNWTKFFLPIAESVKSGNTNNSQWYADFDFDENKNFYHLDYGFEVNQSILDKMNTEIDYLKSTDRMSHPYYCNELIPQYAKENNLKLANVTGITLPIGCVTHQTFLSINKPFPGMTYLGNYKIKLVEVEFSQSLQYGFSITTGVLIAITIIMMLGIVRYKSTPSIRSASPIFLNFILAGGIIVYIGIIVWVGPANDHQCNARLWLVTLGFSTLIGSLVVKNFRIWLIFDNPELKSISITNYQLFPWVGACLVINIILMSILTSVGDLREIDAQGIDSLGKYEFMKVCKMNSSGASTLYTILAYFAALLLVGVFVSWKIRIVDIQEFNESKAIANTLYAISFCLFVIVPLMISPQDKQSETIVLCTAGLFITTAALLIIFTPKFWRVFTLGDGGTNDMFRKKQSNVATARAESSKSSSGPKLNRRGNLVSDDFTDTETSISEKKVNVVAGAVLAEFTDDTISEFDDNNIEQDNDNDNDNNNNNNNNNNNNNNNNNNNNNNNNNNNNNNNNNNNNNNNNNTNTSQPNDEKVEEKQQNDTEEEDKNQ</sequence>
<dbReference type="EMBL" id="AAFI02000047">
    <property type="protein sequence ID" value="EAL66090.1"/>
    <property type="molecule type" value="Genomic_DNA"/>
</dbReference>
<dbReference type="RefSeq" id="XP_640062.1">
    <property type="nucleotide sequence ID" value="XM_634970.1"/>
</dbReference>
<dbReference type="SMR" id="Q54SH7"/>
<dbReference type="FunCoup" id="Q54SH7">
    <property type="interactions" value="12"/>
</dbReference>
<dbReference type="STRING" id="44689.Q54SH7"/>
<dbReference type="GlyCosmos" id="Q54SH7">
    <property type="glycosylation" value="8 sites, No reported glycans"/>
</dbReference>
<dbReference type="GlyGen" id="Q54SH7">
    <property type="glycosylation" value="8 sites"/>
</dbReference>
<dbReference type="PaxDb" id="44689-DDB0231971"/>
<dbReference type="EnsemblProtists" id="EAL66090">
    <property type="protein sequence ID" value="EAL66090"/>
    <property type="gene ID" value="DDB_G0282461"/>
</dbReference>
<dbReference type="GeneID" id="8623590"/>
<dbReference type="KEGG" id="ddi:DDB_G0282461"/>
<dbReference type="dictyBase" id="DDB_G0282461">
    <property type="gene designation" value="grlC"/>
</dbReference>
<dbReference type="VEuPathDB" id="AmoebaDB:DDB_G0282461"/>
<dbReference type="eggNOG" id="KOG1055">
    <property type="taxonomic scope" value="Eukaryota"/>
</dbReference>
<dbReference type="HOGENOM" id="CLU_365408_0_0_1"/>
<dbReference type="InParanoid" id="Q54SH7"/>
<dbReference type="OMA" id="SHPYYCN"/>
<dbReference type="PhylomeDB" id="Q54SH7"/>
<dbReference type="PRO" id="PR:Q54SH7"/>
<dbReference type="Proteomes" id="UP000002195">
    <property type="component" value="Chromosome 3"/>
</dbReference>
<dbReference type="GO" id="GO:0005886">
    <property type="term" value="C:plasma membrane"/>
    <property type="evidence" value="ECO:0000318"/>
    <property type="project" value="GO_Central"/>
</dbReference>
<dbReference type="GO" id="GO:0004930">
    <property type="term" value="F:G protein-coupled receptor activity"/>
    <property type="evidence" value="ECO:0000318"/>
    <property type="project" value="GO_Central"/>
</dbReference>
<dbReference type="GO" id="GO:0007186">
    <property type="term" value="P:G protein-coupled receptor signaling pathway"/>
    <property type="evidence" value="ECO:0000318"/>
    <property type="project" value="GO_Central"/>
</dbReference>
<dbReference type="GO" id="GO:0051593">
    <property type="term" value="P:response to folic acid"/>
    <property type="evidence" value="ECO:0000314"/>
    <property type="project" value="dictyBase"/>
</dbReference>
<dbReference type="CDD" id="cd15047">
    <property type="entry name" value="7tmC_GABA-B-like"/>
    <property type="match status" value="1"/>
</dbReference>
<dbReference type="Gene3D" id="3.40.50.2300">
    <property type="match status" value="2"/>
</dbReference>
<dbReference type="InterPro" id="IPR017978">
    <property type="entry name" value="GPCR_3_C"/>
</dbReference>
<dbReference type="InterPro" id="IPR051530">
    <property type="entry name" value="mGluR/GABA-B-like"/>
</dbReference>
<dbReference type="InterPro" id="IPR003760">
    <property type="entry name" value="PnrA-like"/>
</dbReference>
<dbReference type="PANTHER" id="PTHR46924:SF3">
    <property type="entry name" value="METABOTROPIC GLUTAMATE RECEPTOR-LIKE PROTEIN C-RELATED"/>
    <property type="match status" value="1"/>
</dbReference>
<dbReference type="PANTHER" id="PTHR46924">
    <property type="entry name" value="METABOTROPIC GLUTAMATE RECEPTOR-LIKE PROTEIN C-RELATED-RELATED"/>
    <property type="match status" value="1"/>
</dbReference>
<dbReference type="Pfam" id="PF00003">
    <property type="entry name" value="7tm_3"/>
    <property type="match status" value="1"/>
</dbReference>
<dbReference type="Pfam" id="PF02608">
    <property type="entry name" value="Bmp"/>
    <property type="match status" value="1"/>
</dbReference>
<dbReference type="PROSITE" id="PS50259">
    <property type="entry name" value="G_PROTEIN_RECEP_F3_4"/>
    <property type="match status" value="1"/>
</dbReference>
<gene>
    <name type="primary">grlC</name>
    <name type="ORF">DDB_G0282461</name>
</gene>
<comment type="subcellular location">
    <subcellularLocation>
        <location evidence="5">Membrane</location>
        <topology evidence="5">Multi-pass membrane protein</topology>
    </subcellularLocation>
</comment>
<comment type="developmental stage">
    <text evidence="3">Increased levels found from the tight aggregation stage onward. Levels stayed high during late development. Clear expression at 24 hours when fruiting body formation is close to completion.</text>
</comment>
<comment type="induction">
    <text evidence="4">Down-regulated by phagocytic stimuli.</text>
</comment>
<comment type="similarity">
    <text evidence="5">In the N-terminal section; belongs to the BMP lipoprotein family.</text>
</comment>
<comment type="similarity">
    <text evidence="5">In the C-terminal section; belongs to the G-protein coupled receptor 3 family. GABA-B receptor subfamily.</text>
</comment>
<evidence type="ECO:0000255" key="1"/>
<evidence type="ECO:0000256" key="2">
    <source>
        <dbReference type="SAM" id="MobiDB-lite"/>
    </source>
</evidence>
<evidence type="ECO:0000269" key="3">
    <source>
    </source>
</evidence>
<evidence type="ECO:0000269" key="4">
    <source>
    </source>
</evidence>
<evidence type="ECO:0000305" key="5"/>
<reference key="1">
    <citation type="journal article" date="2005" name="Nature">
        <title>The genome of the social amoeba Dictyostelium discoideum.</title>
        <authorList>
            <person name="Eichinger L."/>
            <person name="Pachebat J.A."/>
            <person name="Gloeckner G."/>
            <person name="Rajandream M.A."/>
            <person name="Sucgang R."/>
            <person name="Berriman M."/>
            <person name="Song J."/>
            <person name="Olsen R."/>
            <person name="Szafranski K."/>
            <person name="Xu Q."/>
            <person name="Tunggal B."/>
            <person name="Kummerfeld S."/>
            <person name="Madera M."/>
            <person name="Konfortov B.A."/>
            <person name="Rivero F."/>
            <person name="Bankier A.T."/>
            <person name="Lehmann R."/>
            <person name="Hamlin N."/>
            <person name="Davies R."/>
            <person name="Gaudet P."/>
            <person name="Fey P."/>
            <person name="Pilcher K."/>
            <person name="Chen G."/>
            <person name="Saunders D."/>
            <person name="Sodergren E.J."/>
            <person name="Davis P."/>
            <person name="Kerhornou A."/>
            <person name="Nie X."/>
            <person name="Hall N."/>
            <person name="Anjard C."/>
            <person name="Hemphill L."/>
            <person name="Bason N."/>
            <person name="Farbrother P."/>
            <person name="Desany B."/>
            <person name="Just E."/>
            <person name="Morio T."/>
            <person name="Rost R."/>
            <person name="Churcher C.M."/>
            <person name="Cooper J."/>
            <person name="Haydock S."/>
            <person name="van Driessche N."/>
            <person name="Cronin A."/>
            <person name="Goodhead I."/>
            <person name="Muzny D.M."/>
            <person name="Mourier T."/>
            <person name="Pain A."/>
            <person name="Lu M."/>
            <person name="Harper D."/>
            <person name="Lindsay R."/>
            <person name="Hauser H."/>
            <person name="James K.D."/>
            <person name="Quiles M."/>
            <person name="Madan Babu M."/>
            <person name="Saito T."/>
            <person name="Buchrieser C."/>
            <person name="Wardroper A."/>
            <person name="Felder M."/>
            <person name="Thangavelu M."/>
            <person name="Johnson D."/>
            <person name="Knights A."/>
            <person name="Loulseged H."/>
            <person name="Mungall K.L."/>
            <person name="Oliver K."/>
            <person name="Price C."/>
            <person name="Quail M.A."/>
            <person name="Urushihara H."/>
            <person name="Hernandez J."/>
            <person name="Rabbinowitsch E."/>
            <person name="Steffen D."/>
            <person name="Sanders M."/>
            <person name="Ma J."/>
            <person name="Kohara Y."/>
            <person name="Sharp S."/>
            <person name="Simmonds M.N."/>
            <person name="Spiegler S."/>
            <person name="Tivey A."/>
            <person name="Sugano S."/>
            <person name="White B."/>
            <person name="Walker D."/>
            <person name="Woodward J.R."/>
            <person name="Winckler T."/>
            <person name="Tanaka Y."/>
            <person name="Shaulsky G."/>
            <person name="Schleicher M."/>
            <person name="Weinstock G.M."/>
            <person name="Rosenthal A."/>
            <person name="Cox E.C."/>
            <person name="Chisholm R.L."/>
            <person name="Gibbs R.A."/>
            <person name="Loomis W.F."/>
            <person name="Platzer M."/>
            <person name="Kay R.R."/>
            <person name="Williams J.G."/>
            <person name="Dear P.H."/>
            <person name="Noegel A.A."/>
            <person name="Barrell B.G."/>
            <person name="Kuspa A."/>
        </authorList>
    </citation>
    <scope>NUCLEOTIDE SEQUENCE [LARGE SCALE GENOMIC DNA]</scope>
    <source>
        <strain>AX4</strain>
    </source>
</reference>
<reference key="2">
    <citation type="journal article" date="2006" name="Eur. J. Cell Biol.">
        <title>The Dictyostelium repertoire of seven transmembrane domain receptors.</title>
        <authorList>
            <person name="Prabhu Y."/>
            <person name="Eichinger L."/>
        </authorList>
    </citation>
    <scope>NOMENCLATURE</scope>
</reference>
<reference key="3">
    <citation type="journal article" date="2007" name="BMC Dev. Biol.">
        <title>GrlJ, a Dictyostelium GABAB-like receptor with roles in post-aggregation development.</title>
        <authorList>
            <person name="Prabhu Y."/>
            <person name="Mueller R."/>
            <person name="Anjard C."/>
            <person name="Noegel A.A."/>
        </authorList>
    </citation>
    <scope>DEVELOPMENTAL STAGE</scope>
</reference>
<reference key="4">
    <citation type="journal article" date="2008" name="BMC Genomics">
        <title>Genome-wide transcriptional changes induced by phagocytosis or growth on bacteria in Dictyostelium.</title>
        <authorList>
            <person name="Sillo A."/>
            <person name="Bloomfield G."/>
            <person name="Balest A."/>
            <person name="Balbo A."/>
            <person name="Pergolizzi B."/>
            <person name="Peracino B."/>
            <person name="Skelton J."/>
            <person name="Ivens A."/>
            <person name="Bozzaro S."/>
        </authorList>
    </citation>
    <scope>INDUCTION [LARGE SCALE ANALYSIS]</scope>
</reference>
<protein>
    <recommendedName>
        <fullName>Metabotropic glutamate receptor-like protein C</fullName>
    </recommendedName>
</protein>
<keyword id="KW-0297">G-protein coupled receptor</keyword>
<keyword id="KW-0325">Glycoprotein</keyword>
<keyword id="KW-0472">Membrane</keyword>
<keyword id="KW-0675">Receptor</keyword>
<keyword id="KW-1185">Reference proteome</keyword>
<keyword id="KW-0732">Signal</keyword>
<keyword id="KW-0807">Transducer</keyword>
<keyword id="KW-0812">Transmembrane</keyword>
<keyword id="KW-1133">Transmembrane helix</keyword>